<dbReference type="EMBL" id="CP000247">
    <property type="protein sequence ID" value="ABG69503.1"/>
    <property type="molecule type" value="Genomic_DNA"/>
</dbReference>
<dbReference type="RefSeq" id="WP_000543389.1">
    <property type="nucleotide sequence ID" value="NC_008253.1"/>
</dbReference>
<dbReference type="SMR" id="Q0THS6"/>
<dbReference type="GeneID" id="75202795"/>
<dbReference type="KEGG" id="ecp:ECP_1496"/>
<dbReference type="HOGENOM" id="CLU_2842804_0_0_6"/>
<dbReference type="Proteomes" id="UP000009182">
    <property type="component" value="Chromosome"/>
</dbReference>
<dbReference type="GO" id="GO:0005886">
    <property type="term" value="C:plasma membrane"/>
    <property type="evidence" value="ECO:0007669"/>
    <property type="project" value="UniProtKB-SubCell"/>
</dbReference>
<dbReference type="InterPro" id="IPR031411">
    <property type="entry name" value="SafA"/>
</dbReference>
<dbReference type="Pfam" id="PF17073">
    <property type="entry name" value="SafA"/>
    <property type="match status" value="1"/>
</dbReference>
<sequence length="65" mass="7328">MHATTVKNKITQRDNYKEIMSVIVVVLLLTLTLIAIFSAIDQLGISEMGRIARDLTHFIINSLQD</sequence>
<feature type="chain" id="PRO_0000340119" description="Two-component-system connector protein SafA">
    <location>
        <begin position="1"/>
        <end position="65"/>
    </location>
</feature>
<feature type="topological domain" description="Cytoplasmic" evidence="1">
    <location>
        <begin position="1"/>
        <end position="18"/>
    </location>
</feature>
<feature type="transmembrane region" description="Helical; Signal-anchor for type II membrane protein" evidence="2">
    <location>
        <begin position="19"/>
        <end position="39"/>
    </location>
</feature>
<feature type="topological domain" description="Periplasmic" evidence="1">
    <location>
        <begin position="40"/>
        <end position="65"/>
    </location>
</feature>
<keyword id="KW-0997">Cell inner membrane</keyword>
<keyword id="KW-1003">Cell membrane</keyword>
<keyword id="KW-0472">Membrane</keyword>
<keyword id="KW-0735">Signal-anchor</keyword>
<keyword id="KW-0346">Stress response</keyword>
<keyword id="KW-0812">Transmembrane</keyword>
<keyword id="KW-1133">Transmembrane helix</keyword>
<organism>
    <name type="scientific">Escherichia coli O6:K15:H31 (strain 536 / UPEC)</name>
    <dbReference type="NCBI Taxonomy" id="362663"/>
    <lineage>
        <taxon>Bacteria</taxon>
        <taxon>Pseudomonadati</taxon>
        <taxon>Pseudomonadota</taxon>
        <taxon>Gammaproteobacteria</taxon>
        <taxon>Enterobacterales</taxon>
        <taxon>Enterobacteriaceae</taxon>
        <taxon>Escherichia</taxon>
    </lineage>
</organism>
<reference key="1">
    <citation type="journal article" date="2006" name="Mol. Microbiol.">
        <title>Role of pathogenicity island-associated integrases in the genome plasticity of uropathogenic Escherichia coli strain 536.</title>
        <authorList>
            <person name="Hochhut B."/>
            <person name="Wilde C."/>
            <person name="Balling G."/>
            <person name="Middendorf B."/>
            <person name="Dobrindt U."/>
            <person name="Brzuszkiewicz E."/>
            <person name="Gottschalk G."/>
            <person name="Carniel E."/>
            <person name="Hacker J."/>
        </authorList>
    </citation>
    <scope>NUCLEOTIDE SEQUENCE [LARGE SCALE GENOMIC DNA]</scope>
    <source>
        <strain>536 / UPEC</strain>
    </source>
</reference>
<name>SAFA_ECOL5</name>
<comment type="function">
    <text evidence="1">Connects the signal transduction between the two-component systems EvgS/EvgA and PhoQ/PhoP, by directly interacting with PhoQ and thus activating the PhoQ/PhoP system, in response to acid stress conditions.</text>
</comment>
<comment type="subunit">
    <text evidence="1">Interacts with PhoQ.</text>
</comment>
<comment type="subcellular location">
    <subcellularLocation>
        <location evidence="1">Cell inner membrane</location>
        <topology evidence="1">Single-pass type II membrane protein</topology>
    </subcellularLocation>
</comment>
<comment type="induction">
    <text evidence="1">By acid stress, via the EvgS/EvgA system.</text>
</comment>
<comment type="similarity">
    <text evidence="3">Belongs to the SafA family.</text>
</comment>
<gene>
    <name type="primary">safA</name>
    <name type="ordered locus">ECP_1496</name>
</gene>
<evidence type="ECO:0000250" key="1"/>
<evidence type="ECO:0000255" key="2"/>
<evidence type="ECO:0000305" key="3"/>
<proteinExistence type="inferred from homology"/>
<protein>
    <recommendedName>
        <fullName>Two-component-system connector protein SafA</fullName>
    </recommendedName>
</protein>
<accession>Q0THS6</accession>